<proteinExistence type="inferred from homology"/>
<name>OPGD_XANC8</name>
<reference key="1">
    <citation type="journal article" date="2005" name="Genome Res.">
        <title>Comparative and functional genomic analyses of the pathogenicity of phytopathogen Xanthomonas campestris pv. campestris.</title>
        <authorList>
            <person name="Qian W."/>
            <person name="Jia Y."/>
            <person name="Ren S.-X."/>
            <person name="He Y.-Q."/>
            <person name="Feng J.-X."/>
            <person name="Lu L.-F."/>
            <person name="Sun Q."/>
            <person name="Ying G."/>
            <person name="Tang D.-J."/>
            <person name="Tang H."/>
            <person name="Wu W."/>
            <person name="Hao P."/>
            <person name="Wang L."/>
            <person name="Jiang B.-L."/>
            <person name="Zeng S."/>
            <person name="Gu W.-Y."/>
            <person name="Lu G."/>
            <person name="Rong L."/>
            <person name="Tian Y."/>
            <person name="Yao Z."/>
            <person name="Fu G."/>
            <person name="Chen B."/>
            <person name="Fang R."/>
            <person name="Qiang B."/>
            <person name="Chen Z."/>
            <person name="Zhao G.-P."/>
            <person name="Tang J.-L."/>
            <person name="He C."/>
        </authorList>
    </citation>
    <scope>NUCLEOTIDE SEQUENCE [LARGE SCALE GENOMIC DNA]</scope>
    <source>
        <strain>8004</strain>
    </source>
</reference>
<organism>
    <name type="scientific">Xanthomonas campestris pv. campestris (strain 8004)</name>
    <dbReference type="NCBI Taxonomy" id="314565"/>
    <lineage>
        <taxon>Bacteria</taxon>
        <taxon>Pseudomonadati</taxon>
        <taxon>Pseudomonadota</taxon>
        <taxon>Gammaproteobacteria</taxon>
        <taxon>Lysobacterales</taxon>
        <taxon>Lysobacteraceae</taxon>
        <taxon>Xanthomonas</taxon>
    </lineage>
</organism>
<sequence>MQRRHFLKNAAAALAALGLPALPPWALAAKAVGLRRLGQPQPFDYAWLKGQARALAKAPYKSHKQVLPGPLESLNWDQYQSIRYRQDHALWADGNGKFQAKFFHLGLYFHTPVHIYDIVDGKAQQLAYDPAAFDYGRSGLGGKQLPKDLGFAGFRLNTRKDTDRDFSAFLGASYFRAVGKEGQYGQSARGLAIDTGTGGPEEFPDFIAYYLEQPADDSDTVVVYGLLDSPSVSGAYRFAITNGEVLVMDIDSALYPRKAIERLGIGPCTSMYQTGENDRRMDWDWRPEIHDTDGLAMWTGGGEWIWRPLCNPPHLRFNMFVDENPRGFGLLQRDRNFDHYQDDGVFYEKRPCLWVEPKSGWGKGSVQLVEIPTVDETFDNIVAFWNPQAKPQPGQELLMGYRLYWGAHPPASSPLAHCMATRTGLGGIVGQKRSHFSWRFAVDFAGGELAALAKDPKAKVEAVLQVSRGTTEIVSARPLHELKGYRAMFDLVPPDEGTQQIDIRLFLRANGKPLTETWLYQWTPPPASERKIY</sequence>
<dbReference type="EMBL" id="CP000050">
    <property type="protein sequence ID" value="AAY51275.1"/>
    <property type="molecule type" value="Genomic_DNA"/>
</dbReference>
<dbReference type="RefSeq" id="WP_011270101.1">
    <property type="nucleotide sequence ID" value="NZ_CP155948.1"/>
</dbReference>
<dbReference type="SMR" id="Q4UNU8"/>
<dbReference type="KEGG" id="xcb:XC_4237"/>
<dbReference type="HOGENOM" id="CLU_023403_2_0_6"/>
<dbReference type="UniPathway" id="UPA00637"/>
<dbReference type="Proteomes" id="UP000000420">
    <property type="component" value="Chromosome"/>
</dbReference>
<dbReference type="GO" id="GO:0030288">
    <property type="term" value="C:outer membrane-bounded periplasmic space"/>
    <property type="evidence" value="ECO:0007669"/>
    <property type="project" value="TreeGrafter"/>
</dbReference>
<dbReference type="GO" id="GO:0030246">
    <property type="term" value="F:carbohydrate binding"/>
    <property type="evidence" value="ECO:0007669"/>
    <property type="project" value="InterPro"/>
</dbReference>
<dbReference type="GO" id="GO:0003824">
    <property type="term" value="F:catalytic activity"/>
    <property type="evidence" value="ECO:0007669"/>
    <property type="project" value="InterPro"/>
</dbReference>
<dbReference type="GO" id="GO:0051274">
    <property type="term" value="P:beta-glucan biosynthetic process"/>
    <property type="evidence" value="ECO:0007669"/>
    <property type="project" value="TreeGrafter"/>
</dbReference>
<dbReference type="FunFam" id="2.60.40.10:FF:002063">
    <property type="entry name" value="Glucans biosynthesis protein D"/>
    <property type="match status" value="1"/>
</dbReference>
<dbReference type="FunFam" id="2.70.98.10:FF:000001">
    <property type="entry name" value="Glucans biosynthesis protein G"/>
    <property type="match status" value="1"/>
</dbReference>
<dbReference type="Gene3D" id="2.70.98.10">
    <property type="match status" value="1"/>
</dbReference>
<dbReference type="Gene3D" id="2.60.40.10">
    <property type="entry name" value="Immunoglobulins"/>
    <property type="match status" value="1"/>
</dbReference>
<dbReference type="HAMAP" id="MF_01068">
    <property type="entry name" value="MdoD_OpgD"/>
    <property type="match status" value="1"/>
</dbReference>
<dbReference type="InterPro" id="IPR011013">
    <property type="entry name" value="Gal_mutarotase_sf_dom"/>
</dbReference>
<dbReference type="InterPro" id="IPR014718">
    <property type="entry name" value="GH-type_carb-bd"/>
</dbReference>
<dbReference type="InterPro" id="IPR023724">
    <property type="entry name" value="Glucan_biosyn_MdoD"/>
</dbReference>
<dbReference type="InterPro" id="IPR014438">
    <property type="entry name" value="Glucan_biosyn_MdoG/MdoD"/>
</dbReference>
<dbReference type="InterPro" id="IPR007444">
    <property type="entry name" value="Glucan_biosyn_MdoG_C"/>
</dbReference>
<dbReference type="InterPro" id="IPR013783">
    <property type="entry name" value="Ig-like_fold"/>
</dbReference>
<dbReference type="InterPro" id="IPR014756">
    <property type="entry name" value="Ig_E-set"/>
</dbReference>
<dbReference type="InterPro" id="IPR006311">
    <property type="entry name" value="TAT_signal"/>
</dbReference>
<dbReference type="PANTHER" id="PTHR30504">
    <property type="entry name" value="GLUCANS BIOSYNTHESIS PROTEIN"/>
    <property type="match status" value="1"/>
</dbReference>
<dbReference type="PANTHER" id="PTHR30504:SF3">
    <property type="entry name" value="GLUCANS BIOSYNTHESIS PROTEIN D"/>
    <property type="match status" value="1"/>
</dbReference>
<dbReference type="Pfam" id="PF04349">
    <property type="entry name" value="MdoG"/>
    <property type="match status" value="1"/>
</dbReference>
<dbReference type="PIRSF" id="PIRSF006281">
    <property type="entry name" value="MdoG"/>
    <property type="match status" value="1"/>
</dbReference>
<dbReference type="SUPFAM" id="SSF81296">
    <property type="entry name" value="E set domains"/>
    <property type="match status" value="1"/>
</dbReference>
<dbReference type="SUPFAM" id="SSF74650">
    <property type="entry name" value="Galactose mutarotase-like"/>
    <property type="match status" value="1"/>
</dbReference>
<dbReference type="PROSITE" id="PS51318">
    <property type="entry name" value="TAT"/>
    <property type="match status" value="1"/>
</dbReference>
<keyword id="KW-0574">Periplasm</keyword>
<keyword id="KW-0732">Signal</keyword>
<comment type="function">
    <text evidence="1">Probably involved in the control of the structural glucose backbone of osmoregulated periplasmic glucans (OPGs).</text>
</comment>
<comment type="pathway">
    <text evidence="1">Glycan metabolism; osmoregulated periplasmic glucan (OPG) biosynthesis.</text>
</comment>
<comment type="subcellular location">
    <subcellularLocation>
        <location evidence="1">Periplasm</location>
    </subcellularLocation>
</comment>
<comment type="PTM">
    <text>Predicted to be exported by the Tat system. The position of the signal peptide cleavage has not been experimentally proven.</text>
</comment>
<comment type="similarity">
    <text evidence="1">Belongs to the OpgD/OpgG family.</text>
</comment>
<feature type="signal peptide" description="Tat-type signal" evidence="1">
    <location>
        <begin position="1"/>
        <end position="28"/>
    </location>
</feature>
<feature type="chain" id="PRO_1000084492" description="Glucans biosynthesis protein D">
    <location>
        <begin position="29"/>
        <end position="533"/>
    </location>
</feature>
<gene>
    <name evidence="1" type="primary">opgD</name>
    <name type="ordered locus">XC_4237</name>
</gene>
<evidence type="ECO:0000255" key="1">
    <source>
        <dbReference type="HAMAP-Rule" id="MF_01068"/>
    </source>
</evidence>
<accession>Q4UNU8</accession>
<protein>
    <recommendedName>
        <fullName evidence="1">Glucans biosynthesis protein D</fullName>
    </recommendedName>
</protein>